<accession>Q18PE1</accession>
<accession>A2A499</accession>
<accession>A2RRD4</accession>
<accession>E9PB56</accession>
<accession>Q6P6A6</accession>
<accession>Q86XG5</accession>
<accession>Q8N2J3</accession>
<accession>Q8NBC1</accession>
<feature type="chain" id="PRO_0000250371" description="Protein Dok-7">
    <location>
        <begin position="1"/>
        <end position="504"/>
    </location>
</feature>
<feature type="domain" description="PH" evidence="2">
    <location>
        <begin position="4"/>
        <end position="109"/>
    </location>
</feature>
<feature type="domain" description="IRS-type PTB" evidence="3">
    <location>
        <begin position="105"/>
        <end position="210"/>
    </location>
</feature>
<feature type="region of interest" description="Disordered" evidence="4">
    <location>
        <begin position="210"/>
        <end position="229"/>
    </location>
</feature>
<feature type="region of interest" description="Disordered" evidence="4">
    <location>
        <begin position="249"/>
        <end position="351"/>
    </location>
</feature>
<feature type="region of interest" description="Disordered" evidence="4">
    <location>
        <begin position="411"/>
        <end position="483"/>
    </location>
</feature>
<feature type="compositionally biased region" description="Low complexity" evidence="4">
    <location>
        <begin position="263"/>
        <end position="279"/>
    </location>
</feature>
<feature type="compositionally biased region" description="Low complexity" evidence="4">
    <location>
        <begin position="288"/>
        <end position="310"/>
    </location>
</feature>
<feature type="compositionally biased region" description="Polar residues" evidence="4">
    <location>
        <begin position="331"/>
        <end position="341"/>
    </location>
</feature>
<feature type="splice variant" id="VSP_020633" description="In isoform 2." evidence="14">
    <location>
        <begin position="1"/>
        <end position="138"/>
    </location>
</feature>
<feature type="splice variant" id="VSP_020634" description="In isoform 2." evidence="14">
    <original>VLARDIPPAVTGQWKLSDLRRYGAVPSGFIFEGGTRCGYW</original>
    <variation>MMSSSWPGTSPRLSRGSGSCLTSGATGPCQADSSLKAGPG</variation>
    <location>
        <begin position="139"/>
        <end position="178"/>
    </location>
</feature>
<feature type="splice variant" id="VSP_047252" description="In isoform 4." evidence="15">
    <original>CGYWAGVFFLSSAEGEQISFLFDCIVRGISPTKGPFGLRPVLPDPSPPGPSTVEERVAQEALETLQLEKRLSLLSHAGRPG</original>
    <variation>GWRLLPVLGRGGADQLPVRLHRPRHLPHQGPLWAAAGSTRPKSPGTLDCGGACGPGSPGNPTAGEAAEPPLTCGQAGQWRG</variation>
    <location>
        <begin position="175"/>
        <end position="255"/>
    </location>
</feature>
<feature type="splice variant" id="VSP_047253" description="In isoform 4." evidence="15">
    <location>
        <begin position="256"/>
        <end position="504"/>
    </location>
</feature>
<feature type="splice variant" id="VSP_020635" description="In isoform 3." evidence="15">
    <original>VNPPP</original>
    <variation>GAAASAPGPATAHSGSPGPVAVDSPGPERPRGESPTYVNIPVSPSSRKQLHYMGLELQEASEGVRGAGASLYAQIDIMATETAHRVGVRHARAREEQLSELEQRKAAPQ</variation>
    <location>
        <begin position="500"/>
        <end position="504"/>
    </location>
</feature>
<feature type="sequence variant" id="VAR_068750" description="In CMS10; results in a significant reduction of AChR clusters; dbSNP:rs763233743." evidence="13">
    <original>E</original>
    <variation>K</variation>
    <location>
        <position position="3"/>
    </location>
</feature>
<feature type="sequence variant" id="VAR_068751" description="In CMS10; results in a significant reduction of AChR clusters." evidence="13">
    <original>P</original>
    <variation>T</variation>
    <location>
        <position position="31"/>
    </location>
</feature>
<feature type="sequence variant" id="VAR_068752" description="In CMS10; results in reduced stimulation of MUSK autophosphorylation." evidence="9 12">
    <original>A</original>
    <variation>V</variation>
    <location>
        <position position="33"/>
    </location>
</feature>
<feature type="sequence variant" id="VAR_068753" description="Does not affect AChR clusters number or complexity; dbSNP:rs62272670." evidence="11 13">
    <original>S</original>
    <variation>L</variation>
    <location>
        <position position="45"/>
    </location>
</feature>
<feature type="sequence variant" id="VAR_068754" description="In CMS10; results in a decrease of branched, c-shaped and perforated AChR clusters; dbSNP:rs940346413." evidence="13">
    <original>T</original>
    <variation>M</variation>
    <location>
        <position position="77"/>
    </location>
</feature>
<feature type="sequence variant" id="VAR_068755" description="In dbSNP:rs138010842." evidence="13">
    <original>A</original>
    <variation>V</variation>
    <location>
        <position position="99"/>
    </location>
</feature>
<feature type="sequence variant" id="VAR_068756" description="In CMS10; results in a significant reduction of AChR clusters." evidence="13">
    <original>G</original>
    <variation>C</variation>
    <location>
        <position position="109"/>
    </location>
</feature>
<feature type="sequence variant" id="VAR_068757" description="In CMS10; dbSNP:rs1429428597." evidence="11">
    <original>V</original>
    <variation>M</variation>
    <location>
        <position position="116"/>
    </location>
</feature>
<feature type="sequence variant" id="VAR_068758" description="In CMS10; dbSNP:rs779798129." evidence="9">
    <original>H</original>
    <variation>Q</variation>
    <location>
        <position position="132"/>
    </location>
</feature>
<feature type="sequence variant" id="VAR_068759" description="In CMS10; results in a significant reduction of AChR clusters; dbSNP:rs571769859." evidence="13">
    <original>V</original>
    <variation>L</variation>
    <location>
        <position position="139"/>
    </location>
</feature>
<feature type="sequence variant" id="VAR_068760" description="In CMS10; dbSNP:rs770987150." evidence="11">
    <original>P</original>
    <variation>L</variation>
    <location>
        <position position="146"/>
    </location>
</feature>
<feature type="sequence variant" id="VAR_068761" description="In CMS10." evidence="11">
    <original>L</original>
    <variation>R</variation>
    <location>
        <position position="157"/>
    </location>
</feature>
<feature type="sequence variant" id="VAR_031246" description="In CMS10; results in a significant reduction of AChR clusters; dbSNP:rs754633490." evidence="12 13">
    <original>R</original>
    <variation>Q</variation>
    <location>
        <position position="158"/>
    </location>
</feature>
<feature type="sequence variant" id="VAR_068762" description="In CMS10; results in a significant reduction of AChR clusters; dbSNP:rs758131044." evidence="13">
    <original>G</original>
    <variation>R</variation>
    <location>
        <position position="161"/>
    </location>
</feature>
<feature type="sequence variant" id="VAR_068763" description="In CMS10; results in a significant reduction of AChR clusters; dbSNP:rs781227659." evidence="13">
    <original>G</original>
    <variation>R</variation>
    <location>
        <position position="166"/>
    </location>
</feature>
<feature type="sequence variant" id="VAR_068764" description="In CMS10; results in a significant reduction of AChR clusters; dbSNP:rs1286619522." evidence="13">
    <original>G</original>
    <variation>D</variation>
    <location>
        <position position="171"/>
    </location>
</feature>
<feature type="sequence variant" id="VAR_068765" description="In CMS10." evidence="11">
    <original>G</original>
    <variation>R</variation>
    <location>
        <position position="171"/>
    </location>
</feature>
<feature type="sequence variant" id="VAR_068766" description="In CMS10; dbSNP:rs768892432." evidence="11">
    <original>G</original>
    <variation>R</variation>
    <location>
        <position position="172"/>
    </location>
</feature>
<feature type="sequence variant" id="VAR_027544" description="In CMS10; results in a significant reduction of AChR clusters; dbSNP:rs118203994." evidence="8 13">
    <original>G</original>
    <variation>A</variation>
    <location>
        <position position="180"/>
    </location>
</feature>
<feature type="sequence variant" id="VAR_068767" description="In CMS10." evidence="11">
    <original>G</original>
    <variation>V</variation>
    <location>
        <position position="180"/>
    </location>
</feature>
<feature type="sequence variant" id="VAR_027545" description="In dbSNP:rs16844422." evidence="13">
    <original>D</original>
    <variation>N</variation>
    <location>
        <position position="197"/>
    </location>
</feature>
<feature type="sequence variant" id="VAR_027546" description="In dbSNP:rs16844460." evidence="13">
    <original>R</original>
    <variation>H</variation>
    <location>
        <position position="261"/>
    </location>
</feature>
<feature type="sequence variant" id="VAR_068768" description="In dbSNP:rs115614731." evidence="13">
    <original>H</original>
    <variation>Q</variation>
    <location>
        <position position="272"/>
    </location>
</feature>
<feature type="sequence variant" id="VAR_027547" description="In dbSNP:rs6811423." evidence="6 13">
    <original>Q</original>
    <variation>R</variation>
    <location>
        <position position="296"/>
    </location>
</feature>
<feature type="sequence variant" id="VAR_068769" description="In dbSNP:rs150728781." evidence="13">
    <original>R</original>
    <variation>C</variation>
    <location>
        <position position="323"/>
    </location>
</feature>
<feature type="sequence variant" id="VAR_050508" description="In dbSNP:rs1487831014.">
    <original>G</original>
    <variation>R</variation>
    <location>
        <position position="379"/>
    </location>
</feature>
<feature type="sequence variant" id="VAR_068770" description="In dbSNP:rs560463670." evidence="13">
    <original>E</original>
    <variation>K</variation>
    <location>
        <position position="382"/>
    </location>
</feature>
<feature type="sequence variant" id="VAR_068771" description="In dbSNP:rs370039804." evidence="13">
    <original>R</original>
    <variation>Q</variation>
    <location>
        <position position="402"/>
    </location>
</feature>
<feature type="sequence variant" id="VAR_027548" description="In dbSNP:rs16844464." evidence="13">
    <original>P</original>
    <variation>S</variation>
    <location>
        <position position="415"/>
    </location>
</feature>
<feature type="sequence variant" id="VAR_027549" description="In dbSNP:rs2020433.">
    <original>G</original>
    <variation>D</variation>
    <location>
        <position position="427"/>
    </location>
</feature>
<feature type="sequence variant" id="VAR_068772" description="In dbSNP:rs753026831." evidence="13">
    <original>A</original>
    <variation>T</variation>
    <location>
        <position position="440"/>
    </location>
</feature>
<feature type="sequence variant" id="VAR_027550" description="In dbSNP:rs16844470." evidence="13">
    <original>R</original>
    <variation>W</variation>
    <location>
        <position position="451"/>
    </location>
</feature>
<feature type="sequence variant" id="VAR_027551" description="In dbSNP:rs9684786." evidence="5 6 13">
    <original>G</original>
    <variation>D</variation>
    <location>
        <position position="461"/>
    </location>
</feature>
<feature type="sequence variant" id="VAR_068773" description="In CMS10; dbSNP:rs147185207." evidence="9">
    <original>P</original>
    <variation>H</variation>
    <location>
        <position position="469"/>
    </location>
</feature>
<feature type="sequence variant" id="VAR_068774" description="In dbSNP:rs184556570." evidence="13">
    <original>P</original>
    <variation>T</variation>
    <location>
        <position position="503"/>
    </location>
</feature>
<feature type="mutagenesis site" description="Reduced stimulation of MUSK autophosphorylation." evidence="12">
    <original>S</original>
    <variation>W</variation>
    <location>
        <position position="30"/>
    </location>
</feature>
<feature type="mutagenesis site" description="Reduced stimulation of MUSK autophosphorylation." evidence="12">
    <original>V</original>
    <variation>A</variation>
    <location>
        <position position="32"/>
    </location>
</feature>
<feature type="mutagenesis site" description="Reduced stimulation of MUSK autophosphorylation; when associated in cis with A-174." evidence="12">
    <original>R</original>
    <variation>Q</variation>
    <location>
        <position position="158"/>
    </location>
</feature>
<feature type="mutagenesis site" description="Reduced stimulation of MUSK autophosphorylation; when associated in cis with Q-158." evidence="12">
    <original>R</original>
    <variation>A</variation>
    <location>
        <position position="174"/>
    </location>
</feature>
<reference key="1">
    <citation type="journal article" date="2006" name="Science">
        <title>The muscle protein Dok-7 is essential for neuromuscular synaptogenesis.</title>
        <authorList>
            <person name="Okada K."/>
            <person name="Inoue A."/>
            <person name="Okada M."/>
            <person name="Murata Y."/>
            <person name="Kakuta S."/>
            <person name="Jigami T."/>
            <person name="Kubo S."/>
            <person name="Shiraishi H."/>
            <person name="Eguchi K."/>
            <person name="Motomura M."/>
            <person name="Akiyama T."/>
            <person name="Iwakura Y."/>
            <person name="Higuchi O."/>
            <person name="Yamanashi Y."/>
        </authorList>
    </citation>
    <scope>NUCLEOTIDE SEQUENCE [MRNA] (ISOFORM 1)</scope>
    <scope>TISSUE SPECIFICITY</scope>
</reference>
<reference key="2">
    <citation type="journal article" date="2004" name="Nat. Genet.">
        <title>Complete sequencing and characterization of 21,243 full-length human cDNAs.</title>
        <authorList>
            <person name="Ota T."/>
            <person name="Suzuki Y."/>
            <person name="Nishikawa T."/>
            <person name="Otsuki T."/>
            <person name="Sugiyama T."/>
            <person name="Irie R."/>
            <person name="Wakamatsu A."/>
            <person name="Hayashi K."/>
            <person name="Sato H."/>
            <person name="Nagai K."/>
            <person name="Kimura K."/>
            <person name="Makita H."/>
            <person name="Sekine M."/>
            <person name="Obayashi M."/>
            <person name="Nishi T."/>
            <person name="Shibahara T."/>
            <person name="Tanaka T."/>
            <person name="Ishii S."/>
            <person name="Yamamoto J."/>
            <person name="Saito K."/>
            <person name="Kawai Y."/>
            <person name="Isono Y."/>
            <person name="Nakamura Y."/>
            <person name="Nagahari K."/>
            <person name="Murakami K."/>
            <person name="Yasuda T."/>
            <person name="Iwayanagi T."/>
            <person name="Wagatsuma M."/>
            <person name="Shiratori A."/>
            <person name="Sudo H."/>
            <person name="Hosoiri T."/>
            <person name="Kaku Y."/>
            <person name="Kodaira H."/>
            <person name="Kondo H."/>
            <person name="Sugawara M."/>
            <person name="Takahashi M."/>
            <person name="Kanda K."/>
            <person name="Yokoi T."/>
            <person name="Furuya T."/>
            <person name="Kikkawa E."/>
            <person name="Omura Y."/>
            <person name="Abe K."/>
            <person name="Kamihara K."/>
            <person name="Katsuta N."/>
            <person name="Sato K."/>
            <person name="Tanikawa M."/>
            <person name="Yamazaki M."/>
            <person name="Ninomiya K."/>
            <person name="Ishibashi T."/>
            <person name="Yamashita H."/>
            <person name="Murakawa K."/>
            <person name="Fujimori K."/>
            <person name="Tanai H."/>
            <person name="Kimata M."/>
            <person name="Watanabe M."/>
            <person name="Hiraoka S."/>
            <person name="Chiba Y."/>
            <person name="Ishida S."/>
            <person name="Ono Y."/>
            <person name="Takiguchi S."/>
            <person name="Watanabe S."/>
            <person name="Yosida M."/>
            <person name="Hotuta T."/>
            <person name="Kusano J."/>
            <person name="Kanehori K."/>
            <person name="Takahashi-Fujii A."/>
            <person name="Hara H."/>
            <person name="Tanase T.-O."/>
            <person name="Nomura Y."/>
            <person name="Togiya S."/>
            <person name="Komai F."/>
            <person name="Hara R."/>
            <person name="Takeuchi K."/>
            <person name="Arita M."/>
            <person name="Imose N."/>
            <person name="Musashino K."/>
            <person name="Yuuki H."/>
            <person name="Oshima A."/>
            <person name="Sasaki N."/>
            <person name="Aotsuka S."/>
            <person name="Yoshikawa Y."/>
            <person name="Matsunawa H."/>
            <person name="Ichihara T."/>
            <person name="Shiohata N."/>
            <person name="Sano S."/>
            <person name="Moriya S."/>
            <person name="Momiyama H."/>
            <person name="Satoh N."/>
            <person name="Takami S."/>
            <person name="Terashima Y."/>
            <person name="Suzuki O."/>
            <person name="Nakagawa S."/>
            <person name="Senoh A."/>
            <person name="Mizoguchi H."/>
            <person name="Goto Y."/>
            <person name="Shimizu F."/>
            <person name="Wakebe H."/>
            <person name="Hishigaki H."/>
            <person name="Watanabe T."/>
            <person name="Sugiyama A."/>
            <person name="Takemoto M."/>
            <person name="Kawakami B."/>
            <person name="Yamazaki M."/>
            <person name="Watanabe K."/>
            <person name="Kumagai A."/>
            <person name="Itakura S."/>
            <person name="Fukuzumi Y."/>
            <person name="Fujimori Y."/>
            <person name="Komiyama M."/>
            <person name="Tashiro H."/>
            <person name="Tanigami A."/>
            <person name="Fujiwara T."/>
            <person name="Ono T."/>
            <person name="Yamada K."/>
            <person name="Fujii Y."/>
            <person name="Ozaki K."/>
            <person name="Hirao M."/>
            <person name="Ohmori Y."/>
            <person name="Kawabata A."/>
            <person name="Hikiji T."/>
            <person name="Kobatake N."/>
            <person name="Inagaki H."/>
            <person name="Ikema Y."/>
            <person name="Okamoto S."/>
            <person name="Okitani R."/>
            <person name="Kawakami T."/>
            <person name="Noguchi S."/>
            <person name="Itoh T."/>
            <person name="Shigeta K."/>
            <person name="Senba T."/>
            <person name="Matsumura K."/>
            <person name="Nakajima Y."/>
            <person name="Mizuno T."/>
            <person name="Morinaga M."/>
            <person name="Sasaki M."/>
            <person name="Togashi T."/>
            <person name="Oyama M."/>
            <person name="Hata H."/>
            <person name="Watanabe M."/>
            <person name="Komatsu T."/>
            <person name="Mizushima-Sugano J."/>
            <person name="Satoh T."/>
            <person name="Shirai Y."/>
            <person name="Takahashi Y."/>
            <person name="Nakagawa K."/>
            <person name="Okumura K."/>
            <person name="Nagase T."/>
            <person name="Nomura N."/>
            <person name="Kikuchi H."/>
            <person name="Masuho Y."/>
            <person name="Yamashita R."/>
            <person name="Nakai K."/>
            <person name="Yada T."/>
            <person name="Nakamura Y."/>
            <person name="Ohara O."/>
            <person name="Isogai T."/>
            <person name="Sugano S."/>
        </authorList>
    </citation>
    <scope>NUCLEOTIDE SEQUENCE [LARGE SCALE MRNA] (ISOFORM 2)</scope>
    <scope>PARTIAL NUCLEOTIDE SEQUENCE [LARGE SCALE MRNA] (ISOFORM 3)</scope>
    <scope>VARIANT ASP-461</scope>
    <source>
        <tissue>Brain</tissue>
        <tissue>Ovary</tissue>
    </source>
</reference>
<reference key="3">
    <citation type="journal article" date="2005" name="Nature">
        <title>Generation and annotation of the DNA sequences of human chromosomes 2 and 4.</title>
        <authorList>
            <person name="Hillier L.W."/>
            <person name="Graves T.A."/>
            <person name="Fulton R.S."/>
            <person name="Fulton L.A."/>
            <person name="Pepin K.H."/>
            <person name="Minx P."/>
            <person name="Wagner-McPherson C."/>
            <person name="Layman D."/>
            <person name="Wylie K."/>
            <person name="Sekhon M."/>
            <person name="Becker M.C."/>
            <person name="Fewell G.A."/>
            <person name="Delehaunty K.D."/>
            <person name="Miner T.L."/>
            <person name="Nash W.E."/>
            <person name="Kremitzki C."/>
            <person name="Oddy L."/>
            <person name="Du H."/>
            <person name="Sun H."/>
            <person name="Bradshaw-Cordum H."/>
            <person name="Ali J."/>
            <person name="Carter J."/>
            <person name="Cordes M."/>
            <person name="Harris A."/>
            <person name="Isak A."/>
            <person name="van Brunt A."/>
            <person name="Nguyen C."/>
            <person name="Du F."/>
            <person name="Courtney L."/>
            <person name="Kalicki J."/>
            <person name="Ozersky P."/>
            <person name="Abbott S."/>
            <person name="Armstrong J."/>
            <person name="Belter E.A."/>
            <person name="Caruso L."/>
            <person name="Cedroni M."/>
            <person name="Cotton M."/>
            <person name="Davidson T."/>
            <person name="Desai A."/>
            <person name="Elliott G."/>
            <person name="Erb T."/>
            <person name="Fronick C."/>
            <person name="Gaige T."/>
            <person name="Haakenson W."/>
            <person name="Haglund K."/>
            <person name="Holmes A."/>
            <person name="Harkins R."/>
            <person name="Kim K."/>
            <person name="Kruchowski S.S."/>
            <person name="Strong C.M."/>
            <person name="Grewal N."/>
            <person name="Goyea E."/>
            <person name="Hou S."/>
            <person name="Levy A."/>
            <person name="Martinka S."/>
            <person name="Mead K."/>
            <person name="McLellan M.D."/>
            <person name="Meyer R."/>
            <person name="Randall-Maher J."/>
            <person name="Tomlinson C."/>
            <person name="Dauphin-Kohlberg S."/>
            <person name="Kozlowicz-Reilly A."/>
            <person name="Shah N."/>
            <person name="Swearengen-Shahid S."/>
            <person name="Snider J."/>
            <person name="Strong J.T."/>
            <person name="Thompson J."/>
            <person name="Yoakum M."/>
            <person name="Leonard S."/>
            <person name="Pearman C."/>
            <person name="Trani L."/>
            <person name="Radionenko M."/>
            <person name="Waligorski J.E."/>
            <person name="Wang C."/>
            <person name="Rock S.M."/>
            <person name="Tin-Wollam A.-M."/>
            <person name="Maupin R."/>
            <person name="Latreille P."/>
            <person name="Wendl M.C."/>
            <person name="Yang S.-P."/>
            <person name="Pohl C."/>
            <person name="Wallis J.W."/>
            <person name="Spieth J."/>
            <person name="Bieri T.A."/>
            <person name="Berkowicz N."/>
            <person name="Nelson J.O."/>
            <person name="Osborne J."/>
            <person name="Ding L."/>
            <person name="Meyer R."/>
            <person name="Sabo A."/>
            <person name="Shotland Y."/>
            <person name="Sinha P."/>
            <person name="Wohldmann P.E."/>
            <person name="Cook L.L."/>
            <person name="Hickenbotham M.T."/>
            <person name="Eldred J."/>
            <person name="Williams D."/>
            <person name="Jones T.A."/>
            <person name="She X."/>
            <person name="Ciccarelli F.D."/>
            <person name="Izaurralde E."/>
            <person name="Taylor J."/>
            <person name="Schmutz J."/>
            <person name="Myers R.M."/>
            <person name="Cox D.R."/>
            <person name="Huang X."/>
            <person name="McPherson J.D."/>
            <person name="Mardis E.R."/>
            <person name="Clifton S.W."/>
            <person name="Warren W.C."/>
            <person name="Chinwalla A.T."/>
            <person name="Eddy S.R."/>
            <person name="Marra M.A."/>
            <person name="Ovcharenko I."/>
            <person name="Furey T.S."/>
            <person name="Miller W."/>
            <person name="Eichler E.E."/>
            <person name="Bork P."/>
            <person name="Suyama M."/>
            <person name="Torrents D."/>
            <person name="Waterston R.H."/>
            <person name="Wilson R.K."/>
        </authorList>
    </citation>
    <scope>NUCLEOTIDE SEQUENCE [LARGE SCALE GENOMIC DNA]</scope>
</reference>
<reference key="4">
    <citation type="journal article" date="2004" name="Genome Res.">
        <title>The status, quality, and expansion of the NIH full-length cDNA project: the Mammalian Gene Collection (MGC).</title>
        <authorList>
            <consortium name="The MGC Project Team"/>
        </authorList>
    </citation>
    <scope>NUCLEOTIDE SEQUENCE [LARGE SCALE MRNA] (ISOFORM 1)</scope>
    <scope>VARIANTS ARG-296 AND ASP-461</scope>
    <source>
        <tissue>Blood</tissue>
        <tissue>Mammary gland</tissue>
    </source>
</reference>
<reference key="5">
    <citation type="journal article" date="2010" name="Mol. Cell">
        <title>The cytoplasmic adaptor protein Dok7 activates the receptor tyrosine kinase MuSK via dimerization.</title>
        <authorList>
            <person name="Bergamin E."/>
            <person name="Hallock P.T."/>
            <person name="Burden S.J."/>
            <person name="Hubbard S.R."/>
        </authorList>
    </citation>
    <scope>INTERACTION WITH MUSK</scope>
    <scope>FUNCTION</scope>
    <scope>CHARACTERIZATION OF VARIANT CMS10 VAL-33</scope>
    <scope>MUTAGENESIS OF SER-30; VAL-32; ARG-158 AND ARG-174</scope>
</reference>
<reference key="6">
    <citation type="journal article" date="2009" name="J. Med. Genet.">
        <title>Germline mutation in DOK7 associated with fetal akinesia deformation sequence.</title>
        <authorList>
            <person name="Vogt J."/>
            <person name="Morgan N.V."/>
            <person name="Marton T."/>
            <person name="Maxwell S."/>
            <person name="Harrison B.J."/>
            <person name="Beeson D."/>
            <person name="Maher E.R."/>
        </authorList>
    </citation>
    <scope>INVOLVEMENT IN FADS3</scope>
</reference>
<reference key="7">
    <citation type="journal article" date="2006" name="Science">
        <title>Dok-7 mutations underlie a neuromuscular junction synaptopathy.</title>
        <authorList>
            <person name="Beeson D."/>
            <person name="Higuchi O."/>
            <person name="Palace J."/>
            <person name="Cossins J."/>
            <person name="Spearman H."/>
            <person name="Maxwell S."/>
            <person name="Newsom-Davis J."/>
            <person name="Burke G."/>
            <person name="Fawcett P."/>
            <person name="Motomura M."/>
            <person name="Muller J.S."/>
            <person name="Lochmuller H."/>
            <person name="Slater C."/>
            <person name="Vincent A."/>
            <person name="Yamanashi Y."/>
        </authorList>
    </citation>
    <scope>VARIANT CMS10 ALA-180</scope>
</reference>
<reference key="8">
    <citation type="journal article" date="2007" name="Brain">
        <title>Phenotypical spectrum of DOK7 mutations in congenital myasthenic syndromes.</title>
        <authorList>
            <person name="Muller J.S."/>
            <person name="Herczegfalvi A."/>
            <person name="Vilchez J.J."/>
            <person name="Colomer J."/>
            <person name="Bachinski L.L."/>
            <person name="Mihaylova V."/>
            <person name="Santos M."/>
            <person name="Schara U."/>
            <person name="Deschauer M."/>
            <person name="Shevell M."/>
            <person name="Poulin C."/>
            <person name="Dias A."/>
            <person name="Soudo A."/>
            <person name="Hietala M."/>
            <person name="Aarimaa T."/>
            <person name="Krahe R."/>
            <person name="Karcagi V."/>
            <person name="Huebner A."/>
            <person name="Beeson D."/>
            <person name="Abicht A."/>
            <person name="Lochmuller H."/>
        </authorList>
    </citation>
    <scope>VARIANTS CMS10 VAL-33; GLN-132 AND HIS-469</scope>
</reference>
<reference key="9">
    <citation type="journal article" date="2010" name="J. Neurol.">
        <title>Phenotype genotype analysis in 15 patients presenting a congenital myasthenic syndrome due to mutations in DOK7.</title>
        <authorList>
            <person name="Ben Ammar A."/>
            <person name="Petit F."/>
            <person name="Alexandri N."/>
            <person name="Gaudon K."/>
            <person name="Bauche S."/>
            <person name="Rouche A."/>
            <person name="Gras D."/>
            <person name="Fournier E."/>
            <person name="Koenig J."/>
            <person name="Stojkovic T."/>
            <person name="Lacour A."/>
            <person name="Petiot P."/>
            <person name="Zagnoli F."/>
            <person name="Viollet L."/>
            <person name="Pellegrini N."/>
            <person name="Orlikowski D."/>
            <person name="Lazaro L."/>
            <person name="Ferrer X."/>
            <person name="Stoltenburg G."/>
            <person name="Paturneau-Jouas M."/>
            <person name="Hentati F."/>
            <person name="Fardeau M."/>
            <person name="Sternberg D."/>
            <person name="Hantai D."/>
            <person name="Richard P."/>
            <person name="Eymard B."/>
        </authorList>
    </citation>
    <scope>VARIANTS CMS10 MET-116; LEU-146; ARG-157; ARG-171; ARG-172 AND VAL-180</scope>
    <scope>VARIANT LEU-45</scope>
</reference>
<reference key="10">
    <citation type="journal article" date="2012" name="Hum. Mol. Genet.">
        <title>The spectrum of mutations that underlie the neuromuscular junction synaptopathy in DOK7 congenital myasthenic syndrome.</title>
        <authorList>
            <person name="Cossins J."/>
            <person name="Liu W.W."/>
            <person name="Belaya K."/>
            <person name="Maxwell S."/>
            <person name="Oldridge M."/>
            <person name="Lester T."/>
            <person name="Robb S."/>
            <person name="Beeson D."/>
        </authorList>
    </citation>
    <scope>VARIANTS CMS10 LYS-3; THR-31; MET-77; CYS-109; LEU-139; GLN-158; ARG-161; ARG-166; ASP-171 AND ALA-180</scope>
    <scope>VARIANTS LEU-45; VAL-99; ASN-197; HIS-261; GLN-272; ARG-296; CYS-323; LYS-382; GLN-402; SER-415; THR-440; TRP-451; ASP-461 AND THR-503</scope>
    <scope>CHARACTERIZATION OF VARIANTS CMS10 LYS-3; THR-31; MET-77; CYS-109; LEU-139; GLN-158; ARG-161; ARG-166; ASP-171 AND ALA-180</scope>
    <scope>CHARACTERIZATION OF VARIANT LEU-45</scope>
</reference>
<comment type="function">
    <text evidence="12">Probable muscle-intrinsic activator of MUSK that plays an essential role in neuromuscular synaptogenesis. Acts in aneural activation of MUSK and subsequent acetylcholine receptor (AchR) clustering in myotubes. Induces autophosphorylation of MUSK.</text>
</comment>
<comment type="subunit">
    <text evidence="1 12">Homodimer (By similarity). Forms a heterotetramer composed of 2 DOK7 and 2 MUSK molecules which facilitates MUSK trans-autophosphorylation on tyrosine residue and activation (By similarity). Interacts (via IRS-type PTB domain) with MUSK (via cytoplasmic part); requires MUSK phosphorylation.</text>
</comment>
<comment type="interaction">
    <interactant intactId="EBI-3046647">
        <id>Q18PE1</id>
    </interactant>
    <interactant intactId="EBI-743414">
        <id>O95967</id>
        <label>EFEMP2</label>
    </interactant>
    <organismsDiffer>false</organismsDiffer>
    <experiments>3</experiments>
</comment>
<comment type="subcellular location">
    <subcellularLocation>
        <location evidence="1">Cell membrane</location>
        <topology evidence="1">Peripheral membrane protein</topology>
    </subcellularLocation>
    <subcellularLocation>
        <location evidence="1">Synapse</location>
    </subcellularLocation>
    <text evidence="1">Accumulates at neuromuscular junctions.</text>
</comment>
<comment type="alternative products">
    <event type="alternative splicing"/>
    <isoform>
        <id>Q18PE1-1</id>
        <name>1</name>
        <sequence type="displayed"/>
    </isoform>
    <isoform>
        <id>Q18PE1-2</id>
        <name>2</name>
        <sequence type="described" ref="VSP_020633 VSP_020634"/>
    </isoform>
    <isoform>
        <id>Q18PE1-4</id>
        <name>4</name>
        <sequence type="described" ref="VSP_047252 VSP_047253"/>
    </isoform>
    <isoform>
        <id>Q18PE1-3</id>
        <name>3</name>
        <sequence type="described" ref="VSP_020635"/>
    </isoform>
</comment>
<comment type="tissue specificity">
    <text evidence="7">Preferentially expressed in skeletal muscle and heart. Present in thigh muscle, diaphragm and heart but not in the liver or spleen (at protein level).</text>
</comment>
<comment type="domain">
    <text evidence="1">The PH domain mediated binding to phospholipids with phosphoinositol headgroups. Affinity is highest for phosphatidyl 3,4,5-trisphosphate, followed by phosphatidylinositol 3,4-bisphosphate and phosphatidylinositol 4,5-bisphosphate (By similarity).</text>
</comment>
<comment type="disease" evidence="8 9 11 12 13">
    <disease id="DI-00494">
        <name>Myasthenic syndrome, congenital, 10</name>
        <acronym>CMS10</acronym>
        <description>A form of congenital myasthenic syndrome, a group of disorders characterized by failure of neuromuscular transmission, including pre-synaptic, synaptic, and post-synaptic disorders that are not of autoimmune origin. Clinical features are easy fatigability and muscle weakness affecting the axial and limb muscles (with hypotonia in early-onset forms), the ocular muscles (leading to ptosis and ophthalmoplegia), and the facial and bulbar musculature (affecting sucking and swallowing, and leading to dysphonia). The symptoms fluctuate and worsen with physical effort. CMS10 is an autosomal recessive, post-synaptic form characterized by a typical 'limb girdle' pattern of muscle weakness with small, simplified neuromuscular junctions but normal acetylcholine receptor and acetylcholinesterase function.</description>
        <dbReference type="MIM" id="254300"/>
    </disease>
    <text>The disease is caused by variants affecting the gene represented in this entry.</text>
</comment>
<comment type="disease" evidence="10">
    <disease id="DI-05536">
        <name>Fetal akinesia deformation sequence 3</name>
        <acronym>FADS3</acronym>
        <description>A clinically and genetically heterogeneous group of disorders with congenital malformations related to impaired fetal movement. Clinical features include fetal akinesia, intrauterine growth retardation, polyhydramnios, arthrogryposis, pulmonary hypoplasia, craniofacial abnormalities, and cryptorchidism. FADS3 inheritance is autosomal recessive.</description>
        <dbReference type="MIM" id="618389"/>
    </disease>
    <text>The disease is caused by variants affecting the gene represented in this entry.</text>
</comment>
<comment type="sequence caution" evidence="15">
    <conflict type="miscellaneous discrepancy">
        <sequence resource="EMBL-CDS" id="BAC11367"/>
    </conflict>
    <text>Contains a poly-A tail in the 5'region.</text>
</comment>
<comment type="online information" name="The Leiden Muscular Dystrophy pages, Docking protein 7 (DOK7)">
    <link uri="https://databases.lovd.nl/shared/genes/DOK7"/>
    <text>Leiden Open Variation Database (LOVD)</text>
</comment>
<name>DOK7_HUMAN</name>
<organism>
    <name type="scientific">Homo sapiens</name>
    <name type="common">Human</name>
    <dbReference type="NCBI Taxonomy" id="9606"/>
    <lineage>
        <taxon>Eukaryota</taxon>
        <taxon>Metazoa</taxon>
        <taxon>Chordata</taxon>
        <taxon>Craniata</taxon>
        <taxon>Vertebrata</taxon>
        <taxon>Euteleostomi</taxon>
        <taxon>Mammalia</taxon>
        <taxon>Eutheria</taxon>
        <taxon>Euarchontoglires</taxon>
        <taxon>Primates</taxon>
        <taxon>Haplorrhini</taxon>
        <taxon>Catarrhini</taxon>
        <taxon>Hominidae</taxon>
        <taxon>Homo</taxon>
    </lineage>
</organism>
<keyword id="KW-0025">Alternative splicing</keyword>
<keyword id="KW-1003">Cell membrane</keyword>
<keyword id="KW-1004">Congenital myasthenic syndrome</keyword>
<keyword id="KW-0225">Disease variant</keyword>
<keyword id="KW-0446">Lipid-binding</keyword>
<keyword id="KW-0472">Membrane</keyword>
<keyword id="KW-1267">Proteomics identification</keyword>
<keyword id="KW-1185">Reference proteome</keyword>
<keyword id="KW-0770">Synapse</keyword>
<sequence length="504" mass="53097">MTEAALVEGQVKLRDGKKWKSRWLVLRKPSPVADCLLMLVYKDKSERIKGLRERSSLTLEDICGLEPGLPYEGLVHTLAIVCLSQAIMLGFDSHEAMCAWDARIRYALGEVHRFHVTVAPGTKLESGPATLHLCNDVLVLARDIPPAVTGQWKLSDLRRYGAVPSGFIFEGGTRCGYWAGVFFLSSAEGEQISFLFDCIVRGISPTKGPFGLRPVLPDPSPPGPSTVEERVAQEALETLQLEKRLSLLSHAGRPGSGGDDRSLSSSSSEASHLDVSASSRLTAWPEQSSSSASTSQEGPRPAAAQAAGEAMVGASRPPPKPLRPRQLQEVGRQSSSDSGIATGSHSSYSSSLSSYAGSSLDVWRATDELGSLLSLPAAGAPEPSLCTCLPGTVEYQVPTSLRAHYDTPRSLCLAPRDHSPPSQGSPGNSAARDSGGQTSAGCPSGWLGTRRRGLVMEAPQGSEATLPGPAPGEPWEAGGPHAGPPPAFFSACPVCGGLKVNPPP</sequence>
<protein>
    <recommendedName>
        <fullName>Protein Dok-7</fullName>
    </recommendedName>
    <alternativeName>
        <fullName>Downstream of tyrosine kinase 7</fullName>
    </alternativeName>
</protein>
<proteinExistence type="evidence at protein level"/>
<evidence type="ECO:0000250" key="1"/>
<evidence type="ECO:0000255" key="2">
    <source>
        <dbReference type="PROSITE-ProRule" id="PRU00145"/>
    </source>
</evidence>
<evidence type="ECO:0000255" key="3">
    <source>
        <dbReference type="PROSITE-ProRule" id="PRU00389"/>
    </source>
</evidence>
<evidence type="ECO:0000256" key="4">
    <source>
        <dbReference type="SAM" id="MobiDB-lite"/>
    </source>
</evidence>
<evidence type="ECO:0000269" key="5">
    <source>
    </source>
</evidence>
<evidence type="ECO:0000269" key="6">
    <source>
    </source>
</evidence>
<evidence type="ECO:0000269" key="7">
    <source>
    </source>
</evidence>
<evidence type="ECO:0000269" key="8">
    <source>
    </source>
</evidence>
<evidence type="ECO:0000269" key="9">
    <source>
    </source>
</evidence>
<evidence type="ECO:0000269" key="10">
    <source>
    </source>
</evidence>
<evidence type="ECO:0000269" key="11">
    <source>
    </source>
</evidence>
<evidence type="ECO:0000269" key="12">
    <source>
    </source>
</evidence>
<evidence type="ECO:0000269" key="13">
    <source>
    </source>
</evidence>
<evidence type="ECO:0000303" key="14">
    <source>
    </source>
</evidence>
<evidence type="ECO:0000305" key="15"/>
<gene>
    <name type="primary">DOK7</name>
    <name type="synonym">C4orf25</name>
</gene>
<dbReference type="EMBL" id="AB220918">
    <property type="protein sequence ID" value="BAE96739.1"/>
    <property type="molecule type" value="mRNA"/>
</dbReference>
<dbReference type="EMBL" id="AK075037">
    <property type="protein sequence ID" value="BAC11367.1"/>
    <property type="status" value="ALT_SEQ"/>
    <property type="molecule type" value="mRNA"/>
</dbReference>
<dbReference type="EMBL" id="AK091037">
    <property type="protein sequence ID" value="BAC03572.1"/>
    <property type="molecule type" value="mRNA"/>
</dbReference>
<dbReference type="EMBL" id="AL590235">
    <property type="status" value="NOT_ANNOTATED_CDS"/>
    <property type="molecule type" value="Genomic_DNA"/>
</dbReference>
<dbReference type="EMBL" id="BC043568">
    <property type="protein sequence ID" value="AAH43568.1"/>
    <property type="molecule type" value="mRNA"/>
</dbReference>
<dbReference type="EMBL" id="BC062369">
    <property type="protein sequence ID" value="AAH62369.1"/>
    <property type="molecule type" value="mRNA"/>
</dbReference>
<dbReference type="EMBL" id="BC131544">
    <property type="protein sequence ID" value="AAI31545.1"/>
    <property type="molecule type" value="mRNA"/>
</dbReference>
<dbReference type="EMBL" id="BC141852">
    <property type="protein sequence ID" value="AAI41853.1"/>
    <property type="molecule type" value="mRNA"/>
</dbReference>
<dbReference type="CCDS" id="CCDS3370.2">
    <molecule id="Q18PE1-1"/>
</dbReference>
<dbReference type="CCDS" id="CCDS54717.1">
    <molecule id="Q18PE1-4"/>
</dbReference>
<dbReference type="RefSeq" id="NP_001158145.1">
    <molecule id="Q18PE1-4"/>
    <property type="nucleotide sequence ID" value="NM_001164673.2"/>
</dbReference>
<dbReference type="RefSeq" id="NP_001243825.1">
    <property type="nucleotide sequence ID" value="NM_001256896.1"/>
</dbReference>
<dbReference type="RefSeq" id="NP_001288000.1">
    <molecule id="Q18PE1-3"/>
    <property type="nucleotide sequence ID" value="NM_001301071.2"/>
</dbReference>
<dbReference type="RefSeq" id="NP_775931.3">
    <molecule id="Q18PE1-1"/>
    <property type="nucleotide sequence ID" value="NM_173660.4"/>
</dbReference>
<dbReference type="SMR" id="Q18PE1"/>
<dbReference type="BioGRID" id="130124">
    <property type="interactions" value="9"/>
</dbReference>
<dbReference type="FunCoup" id="Q18PE1">
    <property type="interactions" value="1080"/>
</dbReference>
<dbReference type="IntAct" id="Q18PE1">
    <property type="interactions" value="5"/>
</dbReference>
<dbReference type="STRING" id="9606.ENSP00000344432"/>
<dbReference type="GlyGen" id="Q18PE1">
    <property type="glycosylation" value="4 sites, 1 O-linked glycan (2 sites)"/>
</dbReference>
<dbReference type="iPTMnet" id="Q18PE1"/>
<dbReference type="PhosphoSitePlus" id="Q18PE1"/>
<dbReference type="BioMuta" id="DOK7"/>
<dbReference type="DMDM" id="115311705"/>
<dbReference type="jPOST" id="Q18PE1"/>
<dbReference type="MassIVE" id="Q18PE1"/>
<dbReference type="PaxDb" id="9606-ENSP00000344432"/>
<dbReference type="PeptideAtlas" id="Q18PE1"/>
<dbReference type="ProteomicsDB" id="19148"/>
<dbReference type="ProteomicsDB" id="61176">
    <molecule id="Q18PE1-1"/>
</dbReference>
<dbReference type="ProteomicsDB" id="61177">
    <molecule id="Q18PE1-2"/>
</dbReference>
<dbReference type="ProteomicsDB" id="61178">
    <molecule id="Q18PE1-3"/>
</dbReference>
<dbReference type="Antibodypedia" id="55035">
    <property type="antibodies" value="444 antibodies from 28 providers"/>
</dbReference>
<dbReference type="DNASU" id="285489"/>
<dbReference type="Ensembl" id="ENST00000340083.6">
    <molecule id="Q18PE1-1"/>
    <property type="protein sequence ID" value="ENSP00000344432.5"/>
    <property type="gene ID" value="ENSG00000175920.18"/>
</dbReference>
<dbReference type="Ensembl" id="ENST00000507039.5">
    <molecule id="Q18PE1-4"/>
    <property type="protein sequence ID" value="ENSP00000423614.1"/>
    <property type="gene ID" value="ENSG00000175920.18"/>
</dbReference>
<dbReference type="GeneID" id="285489"/>
<dbReference type="KEGG" id="hsa:285489"/>
<dbReference type="MANE-Select" id="ENST00000340083.6">
    <property type="protein sequence ID" value="ENSP00000344432.5"/>
    <property type="RefSeq nucleotide sequence ID" value="NM_173660.5"/>
    <property type="RefSeq protein sequence ID" value="NP_775931.3"/>
</dbReference>
<dbReference type="UCSC" id="uc003ghd.4">
    <molecule id="Q18PE1-1"/>
    <property type="organism name" value="human"/>
</dbReference>
<dbReference type="AGR" id="HGNC:26594"/>
<dbReference type="CTD" id="285489"/>
<dbReference type="DisGeNET" id="285489"/>
<dbReference type="GeneCards" id="DOK7"/>
<dbReference type="GeneReviews" id="DOK7"/>
<dbReference type="HGNC" id="HGNC:26594">
    <property type="gene designation" value="DOK7"/>
</dbReference>
<dbReference type="HPA" id="ENSG00000175920">
    <property type="expression patterns" value="Tissue enhanced (heart muscle, skeletal muscle)"/>
</dbReference>
<dbReference type="MalaCards" id="DOK7"/>
<dbReference type="MIM" id="254300">
    <property type="type" value="phenotype"/>
</dbReference>
<dbReference type="MIM" id="610285">
    <property type="type" value="gene"/>
</dbReference>
<dbReference type="MIM" id="618389">
    <property type="type" value="phenotype"/>
</dbReference>
<dbReference type="neXtProt" id="NX_Q18PE1"/>
<dbReference type="OpenTargets" id="ENSG00000175920"/>
<dbReference type="Orphanet" id="994">
    <property type="disease" value="Fetal akinesia deformation sequence"/>
</dbReference>
<dbReference type="Orphanet" id="98913">
    <property type="disease" value="Postsynaptic congenital myasthenic syndromes"/>
</dbReference>
<dbReference type="PharmGKB" id="PA162384035"/>
<dbReference type="VEuPathDB" id="HostDB:ENSG00000175920"/>
<dbReference type="eggNOG" id="ENOG502QQBI">
    <property type="taxonomic scope" value="Eukaryota"/>
</dbReference>
<dbReference type="GeneTree" id="ENSGT00390000015386"/>
<dbReference type="HOGENOM" id="CLU_095366_0_0_1"/>
<dbReference type="InParanoid" id="Q18PE1"/>
<dbReference type="OrthoDB" id="6537982at2759"/>
<dbReference type="PAN-GO" id="Q18PE1">
    <property type="GO annotations" value="3 GO annotations based on evolutionary models"/>
</dbReference>
<dbReference type="PhylomeDB" id="Q18PE1"/>
<dbReference type="TreeFam" id="TF332288"/>
<dbReference type="PathwayCommons" id="Q18PE1"/>
<dbReference type="SignaLink" id="Q18PE1"/>
<dbReference type="SIGNOR" id="Q18PE1"/>
<dbReference type="BioGRID-ORCS" id="285489">
    <property type="hits" value="5 hits in 1138 CRISPR screens"/>
</dbReference>
<dbReference type="ChiTaRS" id="DOK7">
    <property type="organism name" value="human"/>
</dbReference>
<dbReference type="GenomeRNAi" id="285489"/>
<dbReference type="Pharos" id="Q18PE1">
    <property type="development level" value="Tbio"/>
</dbReference>
<dbReference type="PRO" id="PR:Q18PE1"/>
<dbReference type="Proteomes" id="UP000005640">
    <property type="component" value="Chromosome 4"/>
</dbReference>
<dbReference type="RNAct" id="Q18PE1">
    <property type="molecule type" value="protein"/>
</dbReference>
<dbReference type="Bgee" id="ENSG00000175920">
    <property type="expression patterns" value="Expressed in apex of heart and 117 other cell types or tissues"/>
</dbReference>
<dbReference type="ExpressionAtlas" id="Q18PE1">
    <property type="expression patterns" value="baseline and differential"/>
</dbReference>
<dbReference type="GO" id="GO:0005739">
    <property type="term" value="C:mitochondrion"/>
    <property type="evidence" value="ECO:0000314"/>
    <property type="project" value="HPA"/>
</dbReference>
<dbReference type="GO" id="GO:0031594">
    <property type="term" value="C:neuromuscular junction"/>
    <property type="evidence" value="ECO:0007669"/>
    <property type="project" value="Ensembl"/>
</dbReference>
<dbReference type="GO" id="GO:0005654">
    <property type="term" value="C:nucleoplasm"/>
    <property type="evidence" value="ECO:0000314"/>
    <property type="project" value="HPA"/>
</dbReference>
<dbReference type="GO" id="GO:0045211">
    <property type="term" value="C:postsynaptic membrane"/>
    <property type="evidence" value="ECO:0007669"/>
    <property type="project" value="Ensembl"/>
</dbReference>
<dbReference type="GO" id="GO:0035091">
    <property type="term" value="F:phosphatidylinositol binding"/>
    <property type="evidence" value="ECO:0007669"/>
    <property type="project" value="Ensembl"/>
</dbReference>
<dbReference type="GO" id="GO:0019901">
    <property type="term" value="F:protein kinase binding"/>
    <property type="evidence" value="ECO:0000314"/>
    <property type="project" value="UniProtKB"/>
</dbReference>
<dbReference type="GO" id="GO:0035591">
    <property type="term" value="F:signaling adaptor activity"/>
    <property type="evidence" value="ECO:0007669"/>
    <property type="project" value="Ensembl"/>
</dbReference>
<dbReference type="GO" id="GO:0007167">
    <property type="term" value="P:enzyme-linked receptor protein signaling pathway"/>
    <property type="evidence" value="ECO:0007669"/>
    <property type="project" value="Ensembl"/>
</dbReference>
<dbReference type="GO" id="GO:0007528">
    <property type="term" value="P:neuromuscular junction development"/>
    <property type="evidence" value="ECO:0000318"/>
    <property type="project" value="GO_Central"/>
</dbReference>
<dbReference type="GO" id="GO:0061098">
    <property type="term" value="P:positive regulation of protein tyrosine kinase activity"/>
    <property type="evidence" value="ECO:0000314"/>
    <property type="project" value="UniProtKB"/>
</dbReference>
<dbReference type="GO" id="GO:0035022">
    <property type="term" value="P:positive regulation of Rac protein signal transduction"/>
    <property type="evidence" value="ECO:0007669"/>
    <property type="project" value="Ensembl"/>
</dbReference>
<dbReference type="GO" id="GO:1904395">
    <property type="term" value="P:positive regulation of skeletal muscle acetylcholine-gated channel clustering"/>
    <property type="evidence" value="ECO:0007669"/>
    <property type="project" value="Ensembl"/>
</dbReference>
<dbReference type="GO" id="GO:0043113">
    <property type="term" value="P:receptor clustering"/>
    <property type="evidence" value="ECO:0007669"/>
    <property type="project" value="Ensembl"/>
</dbReference>
<dbReference type="CDD" id="cd14677">
    <property type="entry name" value="PH_DOK7"/>
    <property type="match status" value="1"/>
</dbReference>
<dbReference type="CDD" id="cd13165">
    <property type="entry name" value="PTB_DOK7"/>
    <property type="match status" value="1"/>
</dbReference>
<dbReference type="FunFam" id="2.30.29.30:FF:000275">
    <property type="entry name" value="Docking protein 7"/>
    <property type="match status" value="1"/>
</dbReference>
<dbReference type="FunFam" id="2.30.29.30:FF:000336">
    <property type="entry name" value="protein Dok-7 isoform X2"/>
    <property type="match status" value="1"/>
</dbReference>
<dbReference type="Gene3D" id="2.30.29.30">
    <property type="entry name" value="Pleckstrin-homology domain (PH domain)/Phosphotyrosine-binding domain (PTB)"/>
    <property type="match status" value="2"/>
</dbReference>
<dbReference type="InterPro" id="IPR037746">
    <property type="entry name" value="Dok-7"/>
</dbReference>
<dbReference type="InterPro" id="IPR037747">
    <property type="entry name" value="Dok-7_PH"/>
</dbReference>
<dbReference type="InterPro" id="IPR037748">
    <property type="entry name" value="Dok-7_PTB"/>
</dbReference>
<dbReference type="InterPro" id="IPR002404">
    <property type="entry name" value="IRS_PTB"/>
</dbReference>
<dbReference type="InterPro" id="IPR011993">
    <property type="entry name" value="PH-like_dom_sf"/>
</dbReference>
<dbReference type="InterPro" id="IPR001849">
    <property type="entry name" value="PH_domain"/>
</dbReference>
<dbReference type="PANTHER" id="PTHR21636">
    <property type="entry name" value="PROTEIN DOK-7"/>
    <property type="match status" value="1"/>
</dbReference>
<dbReference type="PANTHER" id="PTHR21636:SF2">
    <property type="entry name" value="PROTEIN DOK-7"/>
    <property type="match status" value="1"/>
</dbReference>
<dbReference type="Pfam" id="PF02174">
    <property type="entry name" value="IRS"/>
    <property type="match status" value="1"/>
</dbReference>
<dbReference type="SMART" id="SM01244">
    <property type="entry name" value="IRS"/>
    <property type="match status" value="1"/>
</dbReference>
<dbReference type="SMART" id="SM00233">
    <property type="entry name" value="PH"/>
    <property type="match status" value="1"/>
</dbReference>
<dbReference type="SUPFAM" id="SSF50729">
    <property type="entry name" value="PH domain-like"/>
    <property type="match status" value="2"/>
</dbReference>
<dbReference type="PROSITE" id="PS51064">
    <property type="entry name" value="IRS_PTB"/>
    <property type="match status" value="1"/>
</dbReference>
<dbReference type="PROSITE" id="PS50003">
    <property type="entry name" value="PH_DOMAIN"/>
    <property type="match status" value="1"/>
</dbReference>